<sequence>MKNEKKKSGIEPKVFFPPLIIVGILCWLTVRDLDAANVVINAVFSYVTNVWGWAFEWYMVVMLFGWFWLVFGPYAKKRLGDEKPEFSTASWIFMMFASCTSAAVLFWGSIEIYYYISTPPFGLEPNSTGAKEIGLAYSLFHWGPLPWATYSFLSVAFAYFFFVRKMDVIRPSSTLVPLVGEKHAKGLFGTIVDNFYLVALIFAMGTSLGLATPLVTECMQWLFGIPHTLQLDAIIITCWIILNAICVACGLQKGVRIASDVRSYLSFLMLGWVFIVSGASFIMNYFTDSVGMLLMHLPRMLFYTDAIGKGGFPQGWTVFYWAWWVIYAIQMSIFLARISRGRTVRELCFGMVMGLTASTWILWTVLGSNTLLLMDKNILNIPQLIEQHGVARAIIETWAALPLSTATMWGFFILCFIATVTLINACSYTLAMSTCREVRDGEEPPLLVRIGWSVLVGIIGIVLLALGGLKPIQTAIIAGGCPLFFVNIMVTLSFIKDAKVHWKDK</sequence>
<dbReference type="EMBL" id="CP001144">
    <property type="protein sequence ID" value="ACH76854.1"/>
    <property type="molecule type" value="Genomic_DNA"/>
</dbReference>
<dbReference type="RefSeq" id="WP_000787073.1">
    <property type="nucleotide sequence ID" value="NC_011205.1"/>
</dbReference>
<dbReference type="SMR" id="B5FHG8"/>
<dbReference type="KEGG" id="sed:SeD_A0080"/>
<dbReference type="HOGENOM" id="CLU_010118_6_0_6"/>
<dbReference type="UniPathway" id="UPA00117"/>
<dbReference type="Proteomes" id="UP000008322">
    <property type="component" value="Chromosome"/>
</dbReference>
<dbReference type="GO" id="GO:0005886">
    <property type="term" value="C:plasma membrane"/>
    <property type="evidence" value="ECO:0007669"/>
    <property type="project" value="UniProtKB-SubCell"/>
</dbReference>
<dbReference type="GO" id="GO:0044667">
    <property type="term" value="F:(R)-carnitine:4-(trimethylammonio)butanoate antiporter activity"/>
    <property type="evidence" value="ECO:0007669"/>
    <property type="project" value="UniProtKB-UniRule"/>
</dbReference>
<dbReference type="GO" id="GO:1900751">
    <property type="term" value="P:4-(trimethylammonio)butanoate transport"/>
    <property type="evidence" value="ECO:0007669"/>
    <property type="project" value="InterPro"/>
</dbReference>
<dbReference type="GO" id="GO:0009437">
    <property type="term" value="P:carnitine metabolic process"/>
    <property type="evidence" value="ECO:0007669"/>
    <property type="project" value="UniProtKB-UniRule"/>
</dbReference>
<dbReference type="HAMAP" id="MF_01049">
    <property type="entry name" value="CaiT"/>
    <property type="match status" value="1"/>
</dbReference>
<dbReference type="InterPro" id="IPR018093">
    <property type="entry name" value="BCCT_CS"/>
</dbReference>
<dbReference type="InterPro" id="IPR000060">
    <property type="entry name" value="BCCT_transptr"/>
</dbReference>
<dbReference type="InterPro" id="IPR023449">
    <property type="entry name" value="BCCT_transptr_CaiT"/>
</dbReference>
<dbReference type="NCBIfam" id="TIGR00842">
    <property type="entry name" value="bcct"/>
    <property type="match status" value="1"/>
</dbReference>
<dbReference type="NCBIfam" id="NF002887">
    <property type="entry name" value="PRK03356.1"/>
    <property type="match status" value="1"/>
</dbReference>
<dbReference type="PANTHER" id="PTHR30047">
    <property type="entry name" value="HIGH-AFFINITY CHOLINE TRANSPORT PROTEIN-RELATED"/>
    <property type="match status" value="1"/>
</dbReference>
<dbReference type="PANTHER" id="PTHR30047:SF11">
    <property type="entry name" value="L-CARNITINE_GAMMA-BUTYROBETAINE ANTIPORTER"/>
    <property type="match status" value="1"/>
</dbReference>
<dbReference type="Pfam" id="PF02028">
    <property type="entry name" value="BCCT"/>
    <property type="match status" value="1"/>
</dbReference>
<dbReference type="PROSITE" id="PS01303">
    <property type="entry name" value="BCCT"/>
    <property type="match status" value="1"/>
</dbReference>
<reference key="1">
    <citation type="journal article" date="2011" name="J. Bacteriol.">
        <title>Comparative genomics of 28 Salmonella enterica isolates: evidence for CRISPR-mediated adaptive sublineage evolution.</title>
        <authorList>
            <person name="Fricke W.F."/>
            <person name="Mammel M.K."/>
            <person name="McDermott P.F."/>
            <person name="Tartera C."/>
            <person name="White D.G."/>
            <person name="Leclerc J.E."/>
            <person name="Ravel J."/>
            <person name="Cebula T.A."/>
        </authorList>
    </citation>
    <scope>NUCLEOTIDE SEQUENCE [LARGE SCALE GENOMIC DNA]</scope>
    <source>
        <strain>CT_02021853</strain>
    </source>
</reference>
<feature type="chain" id="PRO_1000136238" description="L-carnitine/gamma-butyrobetaine antiporter">
    <location>
        <begin position="1"/>
        <end position="505"/>
    </location>
</feature>
<feature type="transmembrane region" description="Helical" evidence="1">
    <location>
        <begin position="10"/>
        <end position="30"/>
    </location>
</feature>
<feature type="transmembrane region" description="Helical" evidence="1">
    <location>
        <begin position="51"/>
        <end position="71"/>
    </location>
</feature>
<feature type="transmembrane region" description="Helical" evidence="1">
    <location>
        <begin position="92"/>
        <end position="112"/>
    </location>
</feature>
<feature type="transmembrane region" description="Helical" evidence="1">
    <location>
        <begin position="143"/>
        <end position="163"/>
    </location>
</feature>
<feature type="transmembrane region" description="Helical" evidence="1">
    <location>
        <begin position="195"/>
        <end position="215"/>
    </location>
</feature>
<feature type="transmembrane region" description="Helical" evidence="1">
    <location>
        <begin position="231"/>
        <end position="251"/>
    </location>
</feature>
<feature type="transmembrane region" description="Helical" evidence="1">
    <location>
        <begin position="263"/>
        <end position="283"/>
    </location>
</feature>
<feature type="transmembrane region" description="Helical" evidence="1">
    <location>
        <begin position="316"/>
        <end position="336"/>
    </location>
</feature>
<feature type="transmembrane region" description="Helical" evidence="1">
    <location>
        <begin position="347"/>
        <end position="367"/>
    </location>
</feature>
<feature type="transmembrane region" description="Helical" evidence="1">
    <location>
        <begin position="403"/>
        <end position="423"/>
    </location>
</feature>
<feature type="transmembrane region" description="Helical" evidence="1">
    <location>
        <begin position="446"/>
        <end position="466"/>
    </location>
</feature>
<feature type="transmembrane region" description="Helical" evidence="1">
    <location>
        <begin position="475"/>
        <end position="495"/>
    </location>
</feature>
<protein>
    <recommendedName>
        <fullName evidence="1">L-carnitine/gamma-butyrobetaine antiporter</fullName>
    </recommendedName>
</protein>
<organism>
    <name type="scientific">Salmonella dublin (strain CT_02021853)</name>
    <dbReference type="NCBI Taxonomy" id="439851"/>
    <lineage>
        <taxon>Bacteria</taxon>
        <taxon>Pseudomonadati</taxon>
        <taxon>Pseudomonadota</taxon>
        <taxon>Gammaproteobacteria</taxon>
        <taxon>Enterobacterales</taxon>
        <taxon>Enterobacteriaceae</taxon>
        <taxon>Salmonella</taxon>
    </lineage>
</organism>
<comment type="function">
    <text evidence="1">Catalyzes the exchange of L-carnitine for gamma-butyrobetaine.</text>
</comment>
<comment type="catalytic activity">
    <reaction evidence="1">
        <text>4-(trimethylamino)butanoate(in) + (R)-carnitine(out) = 4-(trimethylamino)butanoate(out) + (R)-carnitine(in)</text>
        <dbReference type="Rhea" id="RHEA:29427"/>
        <dbReference type="ChEBI" id="CHEBI:16244"/>
        <dbReference type="ChEBI" id="CHEBI:16347"/>
    </reaction>
</comment>
<comment type="pathway">
    <text evidence="1">Amine and polyamine metabolism; carnitine metabolism.</text>
</comment>
<comment type="subunit">
    <text evidence="1">Homotrimer.</text>
</comment>
<comment type="subcellular location">
    <subcellularLocation>
        <location evidence="1">Cell inner membrane</location>
        <topology evidence="1">Multi-pass membrane protein</topology>
    </subcellularLocation>
</comment>
<comment type="similarity">
    <text evidence="1">Belongs to the BCCT transporter (TC 2.A.15) family. CaiT subfamily.</text>
</comment>
<evidence type="ECO:0000255" key="1">
    <source>
        <dbReference type="HAMAP-Rule" id="MF_01049"/>
    </source>
</evidence>
<keyword id="KW-0050">Antiport</keyword>
<keyword id="KW-0997">Cell inner membrane</keyword>
<keyword id="KW-1003">Cell membrane</keyword>
<keyword id="KW-0472">Membrane</keyword>
<keyword id="KW-0812">Transmembrane</keyword>
<keyword id="KW-1133">Transmembrane helix</keyword>
<keyword id="KW-0813">Transport</keyword>
<proteinExistence type="inferred from homology"/>
<gene>
    <name evidence="1" type="primary">caiT</name>
    <name type="ordered locus">SeD_A0080</name>
</gene>
<name>CAIT_SALDC</name>
<accession>B5FHG8</accession>